<name>MED20_KLULA</name>
<dbReference type="EMBL" id="CR382123">
    <property type="protein sequence ID" value="CAH01531.1"/>
    <property type="molecule type" value="Genomic_DNA"/>
</dbReference>
<dbReference type="RefSeq" id="XP_452680.1">
    <property type="nucleotide sequence ID" value="XM_452680.1"/>
</dbReference>
<dbReference type="SMR" id="Q6CTQ9"/>
<dbReference type="FunCoup" id="Q6CTQ9">
    <property type="interactions" value="277"/>
</dbReference>
<dbReference type="STRING" id="284590.Q6CTQ9"/>
<dbReference type="PaxDb" id="284590-Q6CTQ9"/>
<dbReference type="KEGG" id="kla:KLLA0_C10780g"/>
<dbReference type="eggNOG" id="ENOG502RXMU">
    <property type="taxonomic scope" value="Eukaryota"/>
</dbReference>
<dbReference type="HOGENOM" id="CLU_065844_1_0_1"/>
<dbReference type="InParanoid" id="Q6CTQ9"/>
<dbReference type="OMA" id="WTQRQSI"/>
<dbReference type="Proteomes" id="UP000000598">
    <property type="component" value="Chromosome C"/>
</dbReference>
<dbReference type="GO" id="GO:0016592">
    <property type="term" value="C:mediator complex"/>
    <property type="evidence" value="ECO:0007669"/>
    <property type="project" value="InterPro"/>
</dbReference>
<dbReference type="GO" id="GO:0003712">
    <property type="term" value="F:transcription coregulator activity"/>
    <property type="evidence" value="ECO:0007669"/>
    <property type="project" value="InterPro"/>
</dbReference>
<dbReference type="GO" id="GO:0006357">
    <property type="term" value="P:regulation of transcription by RNA polymerase II"/>
    <property type="evidence" value="ECO:0007669"/>
    <property type="project" value="InterPro"/>
</dbReference>
<dbReference type="Gene3D" id="3.30.310.180">
    <property type="match status" value="2"/>
</dbReference>
<dbReference type="InterPro" id="IPR016532">
    <property type="entry name" value="Med20"/>
</dbReference>
<dbReference type="InterPro" id="IPR013921">
    <property type="entry name" value="Mediator_Med20"/>
</dbReference>
<dbReference type="Pfam" id="PF08612">
    <property type="entry name" value="Med20"/>
    <property type="match status" value="1"/>
</dbReference>
<dbReference type="PIRSF" id="PIRSF007945">
    <property type="entry name" value="SRB2"/>
    <property type="match status" value="1"/>
</dbReference>
<keyword id="KW-0010">Activator</keyword>
<keyword id="KW-0539">Nucleus</keyword>
<keyword id="KW-1185">Reference proteome</keyword>
<keyword id="KW-0804">Transcription</keyword>
<keyword id="KW-0805">Transcription regulation</keyword>
<evidence type="ECO:0000250" key="1"/>
<evidence type="ECO:0000305" key="2"/>
<comment type="function">
    <text evidence="1">Component of the Mediator complex, a coactivator involved in the regulated transcription of nearly all RNA polymerase II-dependent genes. Mediator functions as a bridge to convey information from gene-specific regulatory proteins to the basal RNA polymerase II transcription machinery. Mediator is recruited to promoters by direct interactions with regulatory proteins and serves as a scaffold for the assembly of a functional preinitiation complex with RNA polymerase II and the general transcription factors (By similarity).</text>
</comment>
<comment type="subunit">
    <text evidence="1">Component of the Mediator complex.</text>
</comment>
<comment type="subcellular location">
    <subcellularLocation>
        <location evidence="1">Nucleus</location>
    </subcellularLocation>
</comment>
<comment type="similarity">
    <text evidence="2">Belongs to the Mediator complex subunit 20 family.</text>
</comment>
<organism>
    <name type="scientific">Kluyveromyces lactis (strain ATCC 8585 / CBS 2359 / DSM 70799 / NBRC 1267 / NRRL Y-1140 / WM37)</name>
    <name type="common">Yeast</name>
    <name type="synonym">Candida sphaerica</name>
    <dbReference type="NCBI Taxonomy" id="284590"/>
    <lineage>
        <taxon>Eukaryota</taxon>
        <taxon>Fungi</taxon>
        <taxon>Dikarya</taxon>
        <taxon>Ascomycota</taxon>
        <taxon>Saccharomycotina</taxon>
        <taxon>Saccharomycetes</taxon>
        <taxon>Saccharomycetales</taxon>
        <taxon>Saccharomycetaceae</taxon>
        <taxon>Kluyveromyces</taxon>
    </lineage>
</organism>
<accession>Q6CTQ9</accession>
<protein>
    <recommendedName>
        <fullName>Mediator of RNA polymerase II transcription subunit 20</fullName>
    </recommendedName>
    <alternativeName>
        <fullName>Mediator complex subunit 20</fullName>
    </alternativeName>
</protein>
<gene>
    <name type="primary">SRB2</name>
    <name type="synonym">MED20</name>
    <name type="ordered locus">KLLA0C10780g</name>
</gene>
<proteinExistence type="inferred from homology"/>
<feature type="chain" id="PRO_0000308566" description="Mediator of RNA polymerase II transcription subunit 20">
    <location>
        <begin position="1"/>
        <end position="211"/>
    </location>
</feature>
<sequence>MTYYGVLFVEKCTPSTITQLQDVLSTDLISMGDKWSFELKTFRTSAKNTDPNDTKVMHTVQLSHKNNETVTIKNQSAIITPTYVTKALYDNGCVFGTPEPFDYMLSNKLSNIWTQRQSIKGEFGVSYQTADLSIRVNNAFSYSGFQGLILELESKSSDNLEAFEKNVERVRTMLSGMGLSDVRVSSDKSQGSKQEDSSLFDLAAHYLKVLG</sequence>
<reference key="1">
    <citation type="journal article" date="2004" name="Nature">
        <title>Genome evolution in yeasts.</title>
        <authorList>
            <person name="Dujon B."/>
            <person name="Sherman D."/>
            <person name="Fischer G."/>
            <person name="Durrens P."/>
            <person name="Casaregola S."/>
            <person name="Lafontaine I."/>
            <person name="de Montigny J."/>
            <person name="Marck C."/>
            <person name="Neuveglise C."/>
            <person name="Talla E."/>
            <person name="Goffard N."/>
            <person name="Frangeul L."/>
            <person name="Aigle M."/>
            <person name="Anthouard V."/>
            <person name="Babour A."/>
            <person name="Barbe V."/>
            <person name="Barnay S."/>
            <person name="Blanchin S."/>
            <person name="Beckerich J.-M."/>
            <person name="Beyne E."/>
            <person name="Bleykasten C."/>
            <person name="Boisrame A."/>
            <person name="Boyer J."/>
            <person name="Cattolico L."/>
            <person name="Confanioleri F."/>
            <person name="de Daruvar A."/>
            <person name="Despons L."/>
            <person name="Fabre E."/>
            <person name="Fairhead C."/>
            <person name="Ferry-Dumazet H."/>
            <person name="Groppi A."/>
            <person name="Hantraye F."/>
            <person name="Hennequin C."/>
            <person name="Jauniaux N."/>
            <person name="Joyet P."/>
            <person name="Kachouri R."/>
            <person name="Kerrest A."/>
            <person name="Koszul R."/>
            <person name="Lemaire M."/>
            <person name="Lesur I."/>
            <person name="Ma L."/>
            <person name="Muller H."/>
            <person name="Nicaud J.-M."/>
            <person name="Nikolski M."/>
            <person name="Oztas S."/>
            <person name="Ozier-Kalogeropoulos O."/>
            <person name="Pellenz S."/>
            <person name="Potier S."/>
            <person name="Richard G.-F."/>
            <person name="Straub M.-L."/>
            <person name="Suleau A."/>
            <person name="Swennen D."/>
            <person name="Tekaia F."/>
            <person name="Wesolowski-Louvel M."/>
            <person name="Westhof E."/>
            <person name="Wirth B."/>
            <person name="Zeniou-Meyer M."/>
            <person name="Zivanovic Y."/>
            <person name="Bolotin-Fukuhara M."/>
            <person name="Thierry A."/>
            <person name="Bouchier C."/>
            <person name="Caudron B."/>
            <person name="Scarpelli C."/>
            <person name="Gaillardin C."/>
            <person name="Weissenbach J."/>
            <person name="Wincker P."/>
            <person name="Souciet J.-L."/>
        </authorList>
    </citation>
    <scope>NUCLEOTIDE SEQUENCE [LARGE SCALE GENOMIC DNA]</scope>
    <source>
        <strain>ATCC 8585 / CBS 2359 / DSM 70799 / NBRC 1267 / NRRL Y-1140 / WM37</strain>
    </source>
</reference>